<comment type="function">
    <text evidence="1">Functions in the biosynthesis of branched-chain amino acids. Catalyzes the dehydration of (2R,3R)-2,3-dihydroxy-3-methylpentanoate (2,3-dihydroxy-3-methylvalerate) into 2-oxo-3-methylpentanoate (2-oxo-3-methylvalerate) and of (2R)-2,3-dihydroxy-3-methylbutanoate (2,3-dihydroxyisovalerate) into 2-oxo-3-methylbutanoate (2-oxoisovalerate), the penultimate precursor to L-isoleucine and L-valine, respectively.</text>
</comment>
<comment type="catalytic activity">
    <reaction evidence="1">
        <text>(2R)-2,3-dihydroxy-3-methylbutanoate = 3-methyl-2-oxobutanoate + H2O</text>
        <dbReference type="Rhea" id="RHEA:24809"/>
        <dbReference type="ChEBI" id="CHEBI:11851"/>
        <dbReference type="ChEBI" id="CHEBI:15377"/>
        <dbReference type="ChEBI" id="CHEBI:49072"/>
        <dbReference type="EC" id="4.2.1.9"/>
    </reaction>
    <physiologicalReaction direction="left-to-right" evidence="1">
        <dbReference type="Rhea" id="RHEA:24810"/>
    </physiologicalReaction>
</comment>
<comment type="catalytic activity">
    <reaction evidence="1">
        <text>(2R,3R)-2,3-dihydroxy-3-methylpentanoate = (S)-3-methyl-2-oxopentanoate + H2O</text>
        <dbReference type="Rhea" id="RHEA:27694"/>
        <dbReference type="ChEBI" id="CHEBI:15377"/>
        <dbReference type="ChEBI" id="CHEBI:35146"/>
        <dbReference type="ChEBI" id="CHEBI:49258"/>
        <dbReference type="EC" id="4.2.1.9"/>
    </reaction>
    <physiologicalReaction direction="left-to-right" evidence="1">
        <dbReference type="Rhea" id="RHEA:27695"/>
    </physiologicalReaction>
</comment>
<comment type="cofactor">
    <cofactor evidence="1">
        <name>[2Fe-2S] cluster</name>
        <dbReference type="ChEBI" id="CHEBI:190135"/>
    </cofactor>
    <text evidence="1">Binds 1 [2Fe-2S] cluster per subunit. This cluster acts as a Lewis acid cofactor.</text>
</comment>
<comment type="cofactor">
    <cofactor evidence="1">
        <name>Mg(2+)</name>
        <dbReference type="ChEBI" id="CHEBI:18420"/>
    </cofactor>
</comment>
<comment type="pathway">
    <text evidence="1">Amino-acid biosynthesis; L-isoleucine biosynthesis; L-isoleucine from 2-oxobutanoate: step 3/4.</text>
</comment>
<comment type="pathway">
    <text evidence="1">Amino-acid biosynthesis; L-valine biosynthesis; L-valine from pyruvate: step 3/4.</text>
</comment>
<comment type="subunit">
    <text evidence="1">Homodimer.</text>
</comment>
<comment type="similarity">
    <text evidence="1">Belongs to the IlvD/Edd family.</text>
</comment>
<organism>
    <name type="scientific">Sinorhizobium medicae (strain WSM419)</name>
    <name type="common">Ensifer medicae</name>
    <dbReference type="NCBI Taxonomy" id="366394"/>
    <lineage>
        <taxon>Bacteria</taxon>
        <taxon>Pseudomonadati</taxon>
        <taxon>Pseudomonadota</taxon>
        <taxon>Alphaproteobacteria</taxon>
        <taxon>Hyphomicrobiales</taxon>
        <taxon>Rhizobiaceae</taxon>
        <taxon>Sinorhizobium/Ensifer group</taxon>
        <taxon>Sinorhizobium</taxon>
    </lineage>
</organism>
<evidence type="ECO:0000255" key="1">
    <source>
        <dbReference type="HAMAP-Rule" id="MF_00012"/>
    </source>
</evidence>
<accession>A6UD23</accession>
<sequence length="612" mass="65411">MPAYRSRTTTHGRNMAGARGLWRATGMKDSDFGKPIIAVVNSFTQFVPGHVHLKDLGQLVAREIEAAGGVAKEFNTIAVDDGIAMGHDGMLYSLPSREIIADSVEYMVNAHCADAMVCISNCDKITPGMLMAALRLNIPAVFVSGGPMEAGKVVLHGKTHALDLVDAMVAAADDKVSDEDVQIIERSACPTCGSCSGMFTANSMNCLTEALGLSLPGNGSTLATHADRKRLFVEAGHLIVDIARRYYEQEDERVLPRSIASKQAFENAMALDIAMGGSTNTVLHILAAAYEGEIDFTMDDIDRLSRKVPCLSKVAPAKADVHMEDVHRAGGIMSILGELDKGGLINRDCPTVHAETLGDAIDRWDITRTSSETVRNFFRAAPGGIPTQTAFSQAARWDELDTDRQNGVIRSVEHPFSKDGGLAVLKGNIALDGCIVKTAGVDESILKFSGPARVFESQDSAVKGILANEVKAGDVVVIRYEGPKGGPGMQEMLYPTSYLKSKGLGKACALITDGRFSGGTSGLSIGHVSPEAANGGTIGLVREGDMIDIDIPNRTIVLRVDEAELAARRKEQDAKGWKPVEQRKRRVTTALKAYAAFATSADRGAVRDLGDR</sequence>
<reference key="1">
    <citation type="submission" date="2007-06" db="EMBL/GenBank/DDBJ databases">
        <title>Complete sequence of Sinorhizobium medicae WSM419 chromosome.</title>
        <authorList>
            <consortium name="US DOE Joint Genome Institute"/>
            <person name="Copeland A."/>
            <person name="Lucas S."/>
            <person name="Lapidus A."/>
            <person name="Barry K."/>
            <person name="Glavina del Rio T."/>
            <person name="Dalin E."/>
            <person name="Tice H."/>
            <person name="Pitluck S."/>
            <person name="Chain P."/>
            <person name="Malfatti S."/>
            <person name="Shin M."/>
            <person name="Vergez L."/>
            <person name="Schmutz J."/>
            <person name="Larimer F."/>
            <person name="Land M."/>
            <person name="Hauser L."/>
            <person name="Kyrpides N."/>
            <person name="Mikhailova N."/>
            <person name="Reeve W.G."/>
            <person name="Richardson P."/>
        </authorList>
    </citation>
    <scope>NUCLEOTIDE SEQUENCE [LARGE SCALE GENOMIC DNA]</scope>
    <source>
        <strain>WSM419</strain>
    </source>
</reference>
<gene>
    <name evidence="1" type="primary">ilvD</name>
    <name type="ordered locus">Smed_2723</name>
</gene>
<proteinExistence type="inferred from homology"/>
<keyword id="KW-0001">2Fe-2S</keyword>
<keyword id="KW-0028">Amino-acid biosynthesis</keyword>
<keyword id="KW-0100">Branched-chain amino acid biosynthesis</keyword>
<keyword id="KW-0408">Iron</keyword>
<keyword id="KW-0411">Iron-sulfur</keyword>
<keyword id="KW-0456">Lyase</keyword>
<keyword id="KW-0460">Magnesium</keyword>
<keyword id="KW-0479">Metal-binding</keyword>
<feature type="chain" id="PRO_1000001062" description="Dihydroxy-acid dehydratase">
    <location>
        <begin position="1"/>
        <end position="612"/>
    </location>
</feature>
<feature type="active site" description="Proton acceptor" evidence="1">
    <location>
        <position position="517"/>
    </location>
</feature>
<feature type="binding site" evidence="1">
    <location>
        <position position="81"/>
    </location>
    <ligand>
        <name>Mg(2+)</name>
        <dbReference type="ChEBI" id="CHEBI:18420"/>
    </ligand>
</feature>
<feature type="binding site" evidence="1">
    <location>
        <position position="122"/>
    </location>
    <ligand>
        <name>[2Fe-2S] cluster</name>
        <dbReference type="ChEBI" id="CHEBI:190135"/>
    </ligand>
</feature>
<feature type="binding site" evidence="1">
    <location>
        <position position="123"/>
    </location>
    <ligand>
        <name>Mg(2+)</name>
        <dbReference type="ChEBI" id="CHEBI:18420"/>
    </ligand>
</feature>
<feature type="binding site" description="via carbamate group" evidence="1">
    <location>
        <position position="124"/>
    </location>
    <ligand>
        <name>Mg(2+)</name>
        <dbReference type="ChEBI" id="CHEBI:18420"/>
    </ligand>
</feature>
<feature type="binding site" evidence="1">
    <location>
        <position position="195"/>
    </location>
    <ligand>
        <name>[2Fe-2S] cluster</name>
        <dbReference type="ChEBI" id="CHEBI:190135"/>
    </ligand>
</feature>
<feature type="binding site" evidence="1">
    <location>
        <position position="491"/>
    </location>
    <ligand>
        <name>Mg(2+)</name>
        <dbReference type="ChEBI" id="CHEBI:18420"/>
    </ligand>
</feature>
<feature type="modified residue" description="N6-carboxylysine" evidence="1">
    <location>
        <position position="124"/>
    </location>
</feature>
<protein>
    <recommendedName>
        <fullName evidence="1">Dihydroxy-acid dehydratase</fullName>
        <shortName evidence="1">DAD</shortName>
        <ecNumber evidence="1">4.2.1.9</ecNumber>
    </recommendedName>
</protein>
<name>ILVD_SINMW</name>
<dbReference type="EC" id="4.2.1.9" evidence="1"/>
<dbReference type="EMBL" id="CP000738">
    <property type="protein sequence ID" value="ABR61553.1"/>
    <property type="molecule type" value="Genomic_DNA"/>
</dbReference>
<dbReference type="RefSeq" id="WP_012066938.1">
    <property type="nucleotide sequence ID" value="NC_009636.1"/>
</dbReference>
<dbReference type="RefSeq" id="YP_001328388.1">
    <property type="nucleotide sequence ID" value="NC_009636.1"/>
</dbReference>
<dbReference type="SMR" id="A6UD23"/>
<dbReference type="STRING" id="366394.Smed_2723"/>
<dbReference type="GeneID" id="61611745"/>
<dbReference type="KEGG" id="smd:Smed_2723"/>
<dbReference type="PATRIC" id="fig|366394.8.peg.5928"/>
<dbReference type="eggNOG" id="COG0129">
    <property type="taxonomic scope" value="Bacteria"/>
</dbReference>
<dbReference type="HOGENOM" id="CLU_014271_4_2_5"/>
<dbReference type="OrthoDB" id="9807077at2"/>
<dbReference type="UniPathway" id="UPA00047">
    <property type="reaction ID" value="UER00057"/>
</dbReference>
<dbReference type="UniPathway" id="UPA00049">
    <property type="reaction ID" value="UER00061"/>
</dbReference>
<dbReference type="Proteomes" id="UP000001108">
    <property type="component" value="Chromosome"/>
</dbReference>
<dbReference type="GO" id="GO:0005829">
    <property type="term" value="C:cytosol"/>
    <property type="evidence" value="ECO:0007669"/>
    <property type="project" value="TreeGrafter"/>
</dbReference>
<dbReference type="GO" id="GO:0051537">
    <property type="term" value="F:2 iron, 2 sulfur cluster binding"/>
    <property type="evidence" value="ECO:0007669"/>
    <property type="project" value="UniProtKB-UniRule"/>
</dbReference>
<dbReference type="GO" id="GO:0004160">
    <property type="term" value="F:dihydroxy-acid dehydratase activity"/>
    <property type="evidence" value="ECO:0007669"/>
    <property type="project" value="UniProtKB-UniRule"/>
</dbReference>
<dbReference type="GO" id="GO:0000287">
    <property type="term" value="F:magnesium ion binding"/>
    <property type="evidence" value="ECO:0007669"/>
    <property type="project" value="UniProtKB-UniRule"/>
</dbReference>
<dbReference type="GO" id="GO:0009097">
    <property type="term" value="P:isoleucine biosynthetic process"/>
    <property type="evidence" value="ECO:0007669"/>
    <property type="project" value="UniProtKB-UniRule"/>
</dbReference>
<dbReference type="GO" id="GO:0009099">
    <property type="term" value="P:L-valine biosynthetic process"/>
    <property type="evidence" value="ECO:0007669"/>
    <property type="project" value="UniProtKB-UniRule"/>
</dbReference>
<dbReference type="FunFam" id="3.50.30.80:FF:000001">
    <property type="entry name" value="Dihydroxy-acid dehydratase"/>
    <property type="match status" value="1"/>
</dbReference>
<dbReference type="Gene3D" id="3.50.30.80">
    <property type="entry name" value="IlvD/EDD C-terminal domain-like"/>
    <property type="match status" value="1"/>
</dbReference>
<dbReference type="HAMAP" id="MF_00012">
    <property type="entry name" value="IlvD"/>
    <property type="match status" value="1"/>
</dbReference>
<dbReference type="InterPro" id="IPR042096">
    <property type="entry name" value="Dihydro-acid_dehy_C"/>
</dbReference>
<dbReference type="InterPro" id="IPR004404">
    <property type="entry name" value="DihydroxyA_deHydtase"/>
</dbReference>
<dbReference type="InterPro" id="IPR020558">
    <property type="entry name" value="DiOHA_6PGluconate_deHydtase_CS"/>
</dbReference>
<dbReference type="InterPro" id="IPR056740">
    <property type="entry name" value="ILV_EDD_C"/>
</dbReference>
<dbReference type="InterPro" id="IPR000581">
    <property type="entry name" value="ILV_EDD_N"/>
</dbReference>
<dbReference type="InterPro" id="IPR037237">
    <property type="entry name" value="IlvD/EDD_N"/>
</dbReference>
<dbReference type="NCBIfam" id="TIGR00110">
    <property type="entry name" value="ilvD"/>
    <property type="match status" value="1"/>
</dbReference>
<dbReference type="NCBIfam" id="NF009103">
    <property type="entry name" value="PRK12448.1"/>
    <property type="match status" value="1"/>
</dbReference>
<dbReference type="PANTHER" id="PTHR43661">
    <property type="entry name" value="D-XYLONATE DEHYDRATASE"/>
    <property type="match status" value="1"/>
</dbReference>
<dbReference type="PANTHER" id="PTHR43661:SF3">
    <property type="entry name" value="D-XYLONATE DEHYDRATASE YAGF-RELATED"/>
    <property type="match status" value="1"/>
</dbReference>
<dbReference type="Pfam" id="PF24877">
    <property type="entry name" value="ILV_EDD_C"/>
    <property type="match status" value="1"/>
</dbReference>
<dbReference type="Pfam" id="PF00920">
    <property type="entry name" value="ILVD_EDD_N"/>
    <property type="match status" value="1"/>
</dbReference>
<dbReference type="SUPFAM" id="SSF143975">
    <property type="entry name" value="IlvD/EDD N-terminal domain-like"/>
    <property type="match status" value="1"/>
</dbReference>
<dbReference type="SUPFAM" id="SSF52016">
    <property type="entry name" value="LeuD/IlvD-like"/>
    <property type="match status" value="1"/>
</dbReference>
<dbReference type="PROSITE" id="PS00886">
    <property type="entry name" value="ILVD_EDD_1"/>
    <property type="match status" value="1"/>
</dbReference>
<dbReference type="PROSITE" id="PS00887">
    <property type="entry name" value="ILVD_EDD_2"/>
    <property type="match status" value="1"/>
</dbReference>